<name>PYRG_ECO5E</name>
<keyword id="KW-0067">ATP-binding</keyword>
<keyword id="KW-0315">Glutamine amidotransferase</keyword>
<keyword id="KW-0436">Ligase</keyword>
<keyword id="KW-0460">Magnesium</keyword>
<keyword id="KW-0479">Metal-binding</keyword>
<keyword id="KW-0547">Nucleotide-binding</keyword>
<keyword id="KW-0665">Pyrimidine biosynthesis</keyword>
<feature type="chain" id="PRO_1000139441" description="CTP synthase">
    <location>
        <begin position="1"/>
        <end position="545"/>
    </location>
</feature>
<feature type="domain" description="Glutamine amidotransferase type-1" evidence="1">
    <location>
        <begin position="291"/>
        <end position="542"/>
    </location>
</feature>
<feature type="region of interest" description="Amidoligase domain" evidence="1">
    <location>
        <begin position="1"/>
        <end position="266"/>
    </location>
</feature>
<feature type="active site" description="Nucleophile; for glutamine hydrolysis" evidence="1">
    <location>
        <position position="379"/>
    </location>
</feature>
<feature type="active site" evidence="1">
    <location>
        <position position="515"/>
    </location>
</feature>
<feature type="active site" evidence="1">
    <location>
        <position position="517"/>
    </location>
</feature>
<feature type="binding site" evidence="1">
    <location>
        <position position="14"/>
    </location>
    <ligand>
        <name>CTP</name>
        <dbReference type="ChEBI" id="CHEBI:37563"/>
        <note>allosteric inhibitor</note>
    </ligand>
</feature>
<feature type="binding site" evidence="1">
    <location>
        <position position="14"/>
    </location>
    <ligand>
        <name>UTP</name>
        <dbReference type="ChEBI" id="CHEBI:46398"/>
    </ligand>
</feature>
<feature type="binding site" evidence="1">
    <location>
        <begin position="15"/>
        <end position="20"/>
    </location>
    <ligand>
        <name>ATP</name>
        <dbReference type="ChEBI" id="CHEBI:30616"/>
    </ligand>
</feature>
<feature type="binding site" evidence="1">
    <location>
        <position position="72"/>
    </location>
    <ligand>
        <name>ATP</name>
        <dbReference type="ChEBI" id="CHEBI:30616"/>
    </ligand>
</feature>
<feature type="binding site" evidence="1">
    <location>
        <position position="72"/>
    </location>
    <ligand>
        <name>Mg(2+)</name>
        <dbReference type="ChEBI" id="CHEBI:18420"/>
    </ligand>
</feature>
<feature type="binding site" evidence="1">
    <location>
        <position position="140"/>
    </location>
    <ligand>
        <name>Mg(2+)</name>
        <dbReference type="ChEBI" id="CHEBI:18420"/>
    </ligand>
</feature>
<feature type="binding site" evidence="1">
    <location>
        <begin position="147"/>
        <end position="149"/>
    </location>
    <ligand>
        <name>CTP</name>
        <dbReference type="ChEBI" id="CHEBI:37563"/>
        <note>allosteric inhibitor</note>
    </ligand>
</feature>
<feature type="binding site" evidence="1">
    <location>
        <begin position="187"/>
        <end position="192"/>
    </location>
    <ligand>
        <name>CTP</name>
        <dbReference type="ChEBI" id="CHEBI:37563"/>
        <note>allosteric inhibitor</note>
    </ligand>
</feature>
<feature type="binding site" evidence="1">
    <location>
        <begin position="187"/>
        <end position="192"/>
    </location>
    <ligand>
        <name>UTP</name>
        <dbReference type="ChEBI" id="CHEBI:46398"/>
    </ligand>
</feature>
<feature type="binding site" evidence="1">
    <location>
        <position position="223"/>
    </location>
    <ligand>
        <name>CTP</name>
        <dbReference type="ChEBI" id="CHEBI:37563"/>
        <note>allosteric inhibitor</note>
    </ligand>
</feature>
<feature type="binding site" evidence="1">
    <location>
        <position position="223"/>
    </location>
    <ligand>
        <name>UTP</name>
        <dbReference type="ChEBI" id="CHEBI:46398"/>
    </ligand>
</feature>
<feature type="binding site" evidence="1">
    <location>
        <begin position="239"/>
        <end position="241"/>
    </location>
    <ligand>
        <name>ATP</name>
        <dbReference type="ChEBI" id="CHEBI:30616"/>
    </ligand>
</feature>
<feature type="binding site" evidence="1">
    <location>
        <position position="352"/>
    </location>
    <ligand>
        <name>L-glutamine</name>
        <dbReference type="ChEBI" id="CHEBI:58359"/>
    </ligand>
</feature>
<feature type="binding site" evidence="1">
    <location>
        <begin position="380"/>
        <end position="383"/>
    </location>
    <ligand>
        <name>L-glutamine</name>
        <dbReference type="ChEBI" id="CHEBI:58359"/>
    </ligand>
</feature>
<feature type="binding site" evidence="1">
    <location>
        <position position="403"/>
    </location>
    <ligand>
        <name>L-glutamine</name>
        <dbReference type="ChEBI" id="CHEBI:58359"/>
    </ligand>
</feature>
<feature type="binding site" evidence="1">
    <location>
        <position position="470"/>
    </location>
    <ligand>
        <name>L-glutamine</name>
        <dbReference type="ChEBI" id="CHEBI:58359"/>
    </ligand>
</feature>
<proteinExistence type="inferred from homology"/>
<organism>
    <name type="scientific">Escherichia coli O157:H7 (strain EC4115 / EHEC)</name>
    <dbReference type="NCBI Taxonomy" id="444450"/>
    <lineage>
        <taxon>Bacteria</taxon>
        <taxon>Pseudomonadati</taxon>
        <taxon>Pseudomonadota</taxon>
        <taxon>Gammaproteobacteria</taxon>
        <taxon>Enterobacterales</taxon>
        <taxon>Enterobacteriaceae</taxon>
        <taxon>Escherichia</taxon>
    </lineage>
</organism>
<reference key="1">
    <citation type="journal article" date="2011" name="Proc. Natl. Acad. Sci. U.S.A.">
        <title>Genomic anatomy of Escherichia coli O157:H7 outbreaks.</title>
        <authorList>
            <person name="Eppinger M."/>
            <person name="Mammel M.K."/>
            <person name="Leclerc J.E."/>
            <person name="Ravel J."/>
            <person name="Cebula T.A."/>
        </authorList>
    </citation>
    <scope>NUCLEOTIDE SEQUENCE [LARGE SCALE GENOMIC DNA]</scope>
    <source>
        <strain>EC4115 / EHEC</strain>
    </source>
</reference>
<dbReference type="EC" id="6.3.4.2" evidence="1"/>
<dbReference type="EMBL" id="CP001164">
    <property type="protein sequence ID" value="ACI37595.1"/>
    <property type="molecule type" value="Genomic_DNA"/>
</dbReference>
<dbReference type="RefSeq" id="WP_000210878.1">
    <property type="nucleotide sequence ID" value="NC_011353.1"/>
</dbReference>
<dbReference type="SMR" id="B5Z3E4"/>
<dbReference type="MEROPS" id="C26.964"/>
<dbReference type="GeneID" id="93779218"/>
<dbReference type="KEGG" id="ecf:ECH74115_4040"/>
<dbReference type="HOGENOM" id="CLU_011675_5_0_6"/>
<dbReference type="UniPathway" id="UPA00159">
    <property type="reaction ID" value="UER00277"/>
</dbReference>
<dbReference type="GO" id="GO:0005829">
    <property type="term" value="C:cytosol"/>
    <property type="evidence" value="ECO:0007669"/>
    <property type="project" value="TreeGrafter"/>
</dbReference>
<dbReference type="GO" id="GO:0005524">
    <property type="term" value="F:ATP binding"/>
    <property type="evidence" value="ECO:0007669"/>
    <property type="project" value="UniProtKB-KW"/>
</dbReference>
<dbReference type="GO" id="GO:0003883">
    <property type="term" value="F:CTP synthase activity"/>
    <property type="evidence" value="ECO:0007669"/>
    <property type="project" value="UniProtKB-UniRule"/>
</dbReference>
<dbReference type="GO" id="GO:0004359">
    <property type="term" value="F:glutaminase activity"/>
    <property type="evidence" value="ECO:0007669"/>
    <property type="project" value="RHEA"/>
</dbReference>
<dbReference type="GO" id="GO:0042802">
    <property type="term" value="F:identical protein binding"/>
    <property type="evidence" value="ECO:0007669"/>
    <property type="project" value="TreeGrafter"/>
</dbReference>
<dbReference type="GO" id="GO:0046872">
    <property type="term" value="F:metal ion binding"/>
    <property type="evidence" value="ECO:0007669"/>
    <property type="project" value="UniProtKB-KW"/>
</dbReference>
<dbReference type="GO" id="GO:0044210">
    <property type="term" value="P:'de novo' CTP biosynthetic process"/>
    <property type="evidence" value="ECO:0007669"/>
    <property type="project" value="UniProtKB-UniRule"/>
</dbReference>
<dbReference type="GO" id="GO:0019856">
    <property type="term" value="P:pyrimidine nucleobase biosynthetic process"/>
    <property type="evidence" value="ECO:0007669"/>
    <property type="project" value="TreeGrafter"/>
</dbReference>
<dbReference type="CDD" id="cd03113">
    <property type="entry name" value="CTPS_N"/>
    <property type="match status" value="1"/>
</dbReference>
<dbReference type="CDD" id="cd01746">
    <property type="entry name" value="GATase1_CTP_Synthase"/>
    <property type="match status" value="1"/>
</dbReference>
<dbReference type="FunFam" id="3.40.50.300:FF:000009">
    <property type="entry name" value="CTP synthase"/>
    <property type="match status" value="1"/>
</dbReference>
<dbReference type="FunFam" id="3.40.50.880:FF:000002">
    <property type="entry name" value="CTP synthase"/>
    <property type="match status" value="1"/>
</dbReference>
<dbReference type="Gene3D" id="3.40.50.880">
    <property type="match status" value="1"/>
</dbReference>
<dbReference type="Gene3D" id="3.40.50.300">
    <property type="entry name" value="P-loop containing nucleotide triphosphate hydrolases"/>
    <property type="match status" value="1"/>
</dbReference>
<dbReference type="HAMAP" id="MF_01227">
    <property type="entry name" value="PyrG"/>
    <property type="match status" value="1"/>
</dbReference>
<dbReference type="InterPro" id="IPR029062">
    <property type="entry name" value="Class_I_gatase-like"/>
</dbReference>
<dbReference type="InterPro" id="IPR004468">
    <property type="entry name" value="CTP_synthase"/>
</dbReference>
<dbReference type="InterPro" id="IPR017456">
    <property type="entry name" value="CTP_synthase_N"/>
</dbReference>
<dbReference type="InterPro" id="IPR017926">
    <property type="entry name" value="GATASE"/>
</dbReference>
<dbReference type="InterPro" id="IPR033828">
    <property type="entry name" value="GATase1_CTP_Synthase"/>
</dbReference>
<dbReference type="InterPro" id="IPR027417">
    <property type="entry name" value="P-loop_NTPase"/>
</dbReference>
<dbReference type="NCBIfam" id="NF003792">
    <property type="entry name" value="PRK05380.1"/>
    <property type="match status" value="1"/>
</dbReference>
<dbReference type="NCBIfam" id="TIGR00337">
    <property type="entry name" value="PyrG"/>
    <property type="match status" value="1"/>
</dbReference>
<dbReference type="PANTHER" id="PTHR11550">
    <property type="entry name" value="CTP SYNTHASE"/>
    <property type="match status" value="1"/>
</dbReference>
<dbReference type="PANTHER" id="PTHR11550:SF0">
    <property type="entry name" value="CTP SYNTHASE-RELATED"/>
    <property type="match status" value="1"/>
</dbReference>
<dbReference type="Pfam" id="PF06418">
    <property type="entry name" value="CTP_synth_N"/>
    <property type="match status" value="1"/>
</dbReference>
<dbReference type="Pfam" id="PF00117">
    <property type="entry name" value="GATase"/>
    <property type="match status" value="1"/>
</dbReference>
<dbReference type="SUPFAM" id="SSF52317">
    <property type="entry name" value="Class I glutamine amidotransferase-like"/>
    <property type="match status" value="1"/>
</dbReference>
<dbReference type="SUPFAM" id="SSF52540">
    <property type="entry name" value="P-loop containing nucleoside triphosphate hydrolases"/>
    <property type="match status" value="1"/>
</dbReference>
<dbReference type="PROSITE" id="PS51273">
    <property type="entry name" value="GATASE_TYPE_1"/>
    <property type="match status" value="1"/>
</dbReference>
<accession>B5Z3E4</accession>
<evidence type="ECO:0000255" key="1">
    <source>
        <dbReference type="HAMAP-Rule" id="MF_01227"/>
    </source>
</evidence>
<comment type="function">
    <text evidence="1">Catalyzes the ATP-dependent amination of UTP to CTP with either L-glutamine or ammonia as the source of nitrogen. Regulates intracellular CTP levels through interactions with the four ribonucleotide triphosphates.</text>
</comment>
<comment type="catalytic activity">
    <reaction evidence="1">
        <text>UTP + L-glutamine + ATP + H2O = CTP + L-glutamate + ADP + phosphate + 2 H(+)</text>
        <dbReference type="Rhea" id="RHEA:26426"/>
        <dbReference type="ChEBI" id="CHEBI:15377"/>
        <dbReference type="ChEBI" id="CHEBI:15378"/>
        <dbReference type="ChEBI" id="CHEBI:29985"/>
        <dbReference type="ChEBI" id="CHEBI:30616"/>
        <dbReference type="ChEBI" id="CHEBI:37563"/>
        <dbReference type="ChEBI" id="CHEBI:43474"/>
        <dbReference type="ChEBI" id="CHEBI:46398"/>
        <dbReference type="ChEBI" id="CHEBI:58359"/>
        <dbReference type="ChEBI" id="CHEBI:456216"/>
        <dbReference type="EC" id="6.3.4.2"/>
    </reaction>
</comment>
<comment type="catalytic activity">
    <reaction evidence="1">
        <text>L-glutamine + H2O = L-glutamate + NH4(+)</text>
        <dbReference type="Rhea" id="RHEA:15889"/>
        <dbReference type="ChEBI" id="CHEBI:15377"/>
        <dbReference type="ChEBI" id="CHEBI:28938"/>
        <dbReference type="ChEBI" id="CHEBI:29985"/>
        <dbReference type="ChEBI" id="CHEBI:58359"/>
    </reaction>
</comment>
<comment type="catalytic activity">
    <reaction evidence="1">
        <text>UTP + NH4(+) + ATP = CTP + ADP + phosphate + 2 H(+)</text>
        <dbReference type="Rhea" id="RHEA:16597"/>
        <dbReference type="ChEBI" id="CHEBI:15378"/>
        <dbReference type="ChEBI" id="CHEBI:28938"/>
        <dbReference type="ChEBI" id="CHEBI:30616"/>
        <dbReference type="ChEBI" id="CHEBI:37563"/>
        <dbReference type="ChEBI" id="CHEBI:43474"/>
        <dbReference type="ChEBI" id="CHEBI:46398"/>
        <dbReference type="ChEBI" id="CHEBI:456216"/>
    </reaction>
</comment>
<comment type="activity regulation">
    <text evidence="1">Allosterically activated by GTP, when glutamine is the substrate; GTP has no effect on the reaction when ammonia is the substrate. The allosteric effector GTP functions by stabilizing the protein conformation that binds the tetrahedral intermediate(s) formed during glutamine hydrolysis. Inhibited by the product CTP, via allosteric rather than competitive inhibition.</text>
</comment>
<comment type="pathway">
    <text evidence="1">Pyrimidine metabolism; CTP biosynthesis via de novo pathway; CTP from UDP: step 2/2.</text>
</comment>
<comment type="subunit">
    <text evidence="1">Homotetramer.</text>
</comment>
<comment type="miscellaneous">
    <text evidence="1">CTPSs have evolved a hybrid strategy for distinguishing between UTP and CTP. The overlapping regions of the product feedback inhibitory and substrate sites recognize a common feature in both compounds, the triphosphate moiety. To differentiate isosteric substrate and product pyrimidine rings, an additional pocket far from the expected kinase/ligase catalytic site, specifically recognizes the cytosine and ribose portions of the product inhibitor.</text>
</comment>
<comment type="similarity">
    <text evidence="1">Belongs to the CTP synthase family.</text>
</comment>
<protein>
    <recommendedName>
        <fullName evidence="1">CTP synthase</fullName>
        <ecNumber evidence="1">6.3.4.2</ecNumber>
    </recommendedName>
    <alternativeName>
        <fullName evidence="1">Cytidine 5'-triphosphate synthase</fullName>
    </alternativeName>
    <alternativeName>
        <fullName evidence="1">Cytidine triphosphate synthetase</fullName>
        <shortName evidence="1">CTP synthetase</shortName>
        <shortName evidence="1">CTPS</shortName>
    </alternativeName>
    <alternativeName>
        <fullName evidence="1">UTP--ammonia ligase</fullName>
    </alternativeName>
</protein>
<gene>
    <name evidence="1" type="primary">pyrG</name>
    <name type="ordered locus">ECH74115_4040</name>
</gene>
<sequence>MTTNYIFVTGGVVSSLGKGIAAASLAAILEARGLNVTIMKLDPYINVDPGTMSPIQHGEVFVTEDGAETDLDLGHYERFIRTKMSRRNNFTTGRIYSDVLRKERRGDYLGATVQVIPHITNAIKERVLEGGEGHDVVLVEIGGTVGDIESLPFLEAIRQMAVEIGREHTLFMHLTLVPYMAASGEVKTKPTQHSVKELLSIGIQPDILICRSDRAVPANERAKIALFCNVPEKAVISLKDVDSIYKIPGLLKSQGLDDYICKRFSLNCPEANLSEWEQVIFEEANPVSEVTIGMVGKYIELPDAYKSVIEALKHGGLKNRVSVNIKLIDSQDVETRGVEILKGLDAILVPGGFGYRGVEGMITTARFARENNIPYLGICLGMQVALIDYARHVANMENANSTEFVPDCKYPVVALITEWRDENGNVEVRSEKSDLGGTMRLGAQQCQLVDDSLVRQLYNAPTIVERHRHRYEVNNMLLKQIEDAGLRVAGRSGDDQLVEIIEVPNHPWFVACQFHPEFTSTPRDGHPLFAGFVKAASEFQKRQAK</sequence>